<accession>Q3TS39</accession>
<keyword id="KW-0325">Glycoprotein</keyword>
<keyword id="KW-0472">Membrane</keyword>
<keyword id="KW-1185">Reference proteome</keyword>
<keyword id="KW-0812">Transmembrane</keyword>
<keyword id="KW-1133">Transmembrane helix</keyword>
<protein>
    <recommendedName>
        <fullName evidence="2">Small integral membrane protein 33</fullName>
    </recommendedName>
</protein>
<name>SIM33_MOUSE</name>
<evidence type="ECO:0000255" key="1"/>
<evidence type="ECO:0000312" key="2">
    <source>
        <dbReference type="MGI" id="MGI:1920699"/>
    </source>
</evidence>
<dbReference type="EMBL" id="AC132837">
    <property type="status" value="NOT_ANNOTATED_CDS"/>
    <property type="molecule type" value="Genomic_DNA"/>
</dbReference>
<dbReference type="EMBL" id="AK162297">
    <property type="protein sequence ID" value="BAE36837.1"/>
    <property type="molecule type" value="mRNA"/>
</dbReference>
<dbReference type="CCDS" id="CCDS50252.1"/>
<dbReference type="RefSeq" id="NP_001028340.1">
    <property type="nucleotide sequence ID" value="NM_001033168.2"/>
</dbReference>
<dbReference type="STRING" id="10090.ENSMUSP00000095222"/>
<dbReference type="GlyCosmos" id="Q3TS39">
    <property type="glycosylation" value="1 site, No reported glycans"/>
</dbReference>
<dbReference type="GlyGen" id="Q3TS39">
    <property type="glycosylation" value="1 site"/>
</dbReference>
<dbReference type="PaxDb" id="10090-ENSMUSP00000095222"/>
<dbReference type="Ensembl" id="ENSMUST00000097617.3">
    <property type="protein sequence ID" value="ENSMUSP00000095222.3"/>
    <property type="gene ID" value="ENSMUSG00000073598.4"/>
</dbReference>
<dbReference type="GeneID" id="73449"/>
<dbReference type="KEGG" id="mmu:73449"/>
<dbReference type="UCSC" id="uc008ems.1">
    <property type="organism name" value="mouse"/>
</dbReference>
<dbReference type="AGR" id="MGI:1920699"/>
<dbReference type="CTD" id="111064649"/>
<dbReference type="MGI" id="MGI:1920699">
    <property type="gene designation" value="Smim33"/>
</dbReference>
<dbReference type="VEuPathDB" id="HostDB:ENSMUSG00000073598"/>
<dbReference type="eggNOG" id="ENOG502TBEI">
    <property type="taxonomic scope" value="Eukaryota"/>
</dbReference>
<dbReference type="GeneTree" id="ENSGT00390000006836"/>
<dbReference type="HOGENOM" id="CLU_1921980_0_0_1"/>
<dbReference type="InParanoid" id="Q3TS39"/>
<dbReference type="OMA" id="HEDAQQE"/>
<dbReference type="OrthoDB" id="9449854at2759"/>
<dbReference type="PhylomeDB" id="Q3TS39"/>
<dbReference type="TreeFam" id="TF353510"/>
<dbReference type="BioGRID-ORCS" id="73449">
    <property type="hits" value="0 hits in 76 CRISPR screens"/>
</dbReference>
<dbReference type="PRO" id="PR:Q3TS39"/>
<dbReference type="Proteomes" id="UP000000589">
    <property type="component" value="Chromosome 18"/>
</dbReference>
<dbReference type="RNAct" id="Q3TS39">
    <property type="molecule type" value="protein"/>
</dbReference>
<dbReference type="Bgee" id="ENSMUSG00000073598">
    <property type="expression patterns" value="Expressed in spermatid and 38 other cell types or tissues"/>
</dbReference>
<dbReference type="GO" id="GO:0016020">
    <property type="term" value="C:membrane"/>
    <property type="evidence" value="ECO:0007669"/>
    <property type="project" value="UniProtKB-SubCell"/>
</dbReference>
<dbReference type="InterPro" id="IPR038803">
    <property type="entry name" value="SMIM33"/>
</dbReference>
<dbReference type="PANTHER" id="PTHR37873">
    <property type="entry name" value="SMALL INTEGRAL MEMBRANE PROTEIN 33"/>
    <property type="match status" value="1"/>
</dbReference>
<dbReference type="PANTHER" id="PTHR37873:SF1">
    <property type="entry name" value="SMALL INTEGRAL MEMBRANE PROTEIN 33"/>
    <property type="match status" value="1"/>
</dbReference>
<sequence>MHQDDYYPQPSLLVNGSLDQEPQRQLPDMPPRGGDGLPLLAAIIAAFVLLAICIVLAVHFGPALHQGQATLLTEPPALKPENGVYLIHWRLLSLQDSHRESQQGLFIPHSGPALDGHRPSIDEVTYL</sequence>
<comment type="subcellular location">
    <subcellularLocation>
        <location evidence="1">Membrane</location>
        <topology evidence="1">Single-pass membrane protein</topology>
    </subcellularLocation>
</comment>
<organism>
    <name type="scientific">Mus musculus</name>
    <name type="common">Mouse</name>
    <dbReference type="NCBI Taxonomy" id="10090"/>
    <lineage>
        <taxon>Eukaryota</taxon>
        <taxon>Metazoa</taxon>
        <taxon>Chordata</taxon>
        <taxon>Craniata</taxon>
        <taxon>Vertebrata</taxon>
        <taxon>Euteleostomi</taxon>
        <taxon>Mammalia</taxon>
        <taxon>Eutheria</taxon>
        <taxon>Euarchontoglires</taxon>
        <taxon>Glires</taxon>
        <taxon>Rodentia</taxon>
        <taxon>Myomorpha</taxon>
        <taxon>Muroidea</taxon>
        <taxon>Muridae</taxon>
        <taxon>Murinae</taxon>
        <taxon>Mus</taxon>
        <taxon>Mus</taxon>
    </lineage>
</organism>
<gene>
    <name evidence="2" type="primary">Smim33</name>
</gene>
<proteinExistence type="evidence at transcript level"/>
<reference key="1">
    <citation type="journal article" date="2005" name="Science">
        <title>The transcriptional landscape of the mammalian genome.</title>
        <authorList>
            <person name="Carninci P."/>
            <person name="Kasukawa T."/>
            <person name="Katayama S."/>
            <person name="Gough J."/>
            <person name="Frith M.C."/>
            <person name="Maeda N."/>
            <person name="Oyama R."/>
            <person name="Ravasi T."/>
            <person name="Lenhard B."/>
            <person name="Wells C."/>
            <person name="Kodzius R."/>
            <person name="Shimokawa K."/>
            <person name="Bajic V.B."/>
            <person name="Brenner S.E."/>
            <person name="Batalov S."/>
            <person name="Forrest A.R."/>
            <person name="Zavolan M."/>
            <person name="Davis M.J."/>
            <person name="Wilming L.G."/>
            <person name="Aidinis V."/>
            <person name="Allen J.E."/>
            <person name="Ambesi-Impiombato A."/>
            <person name="Apweiler R."/>
            <person name="Aturaliya R.N."/>
            <person name="Bailey T.L."/>
            <person name="Bansal M."/>
            <person name="Baxter L."/>
            <person name="Beisel K.W."/>
            <person name="Bersano T."/>
            <person name="Bono H."/>
            <person name="Chalk A.M."/>
            <person name="Chiu K.P."/>
            <person name="Choudhary V."/>
            <person name="Christoffels A."/>
            <person name="Clutterbuck D.R."/>
            <person name="Crowe M.L."/>
            <person name="Dalla E."/>
            <person name="Dalrymple B.P."/>
            <person name="de Bono B."/>
            <person name="Della Gatta G."/>
            <person name="di Bernardo D."/>
            <person name="Down T."/>
            <person name="Engstrom P."/>
            <person name="Fagiolini M."/>
            <person name="Faulkner G."/>
            <person name="Fletcher C.F."/>
            <person name="Fukushima T."/>
            <person name="Furuno M."/>
            <person name="Futaki S."/>
            <person name="Gariboldi M."/>
            <person name="Georgii-Hemming P."/>
            <person name="Gingeras T.R."/>
            <person name="Gojobori T."/>
            <person name="Green R.E."/>
            <person name="Gustincich S."/>
            <person name="Harbers M."/>
            <person name="Hayashi Y."/>
            <person name="Hensch T.K."/>
            <person name="Hirokawa N."/>
            <person name="Hill D."/>
            <person name="Huminiecki L."/>
            <person name="Iacono M."/>
            <person name="Ikeo K."/>
            <person name="Iwama A."/>
            <person name="Ishikawa T."/>
            <person name="Jakt M."/>
            <person name="Kanapin A."/>
            <person name="Katoh M."/>
            <person name="Kawasawa Y."/>
            <person name="Kelso J."/>
            <person name="Kitamura H."/>
            <person name="Kitano H."/>
            <person name="Kollias G."/>
            <person name="Krishnan S.P."/>
            <person name="Kruger A."/>
            <person name="Kummerfeld S.K."/>
            <person name="Kurochkin I.V."/>
            <person name="Lareau L.F."/>
            <person name="Lazarevic D."/>
            <person name="Lipovich L."/>
            <person name="Liu J."/>
            <person name="Liuni S."/>
            <person name="McWilliam S."/>
            <person name="Madan Babu M."/>
            <person name="Madera M."/>
            <person name="Marchionni L."/>
            <person name="Matsuda H."/>
            <person name="Matsuzawa S."/>
            <person name="Miki H."/>
            <person name="Mignone F."/>
            <person name="Miyake S."/>
            <person name="Morris K."/>
            <person name="Mottagui-Tabar S."/>
            <person name="Mulder N."/>
            <person name="Nakano N."/>
            <person name="Nakauchi H."/>
            <person name="Ng P."/>
            <person name="Nilsson R."/>
            <person name="Nishiguchi S."/>
            <person name="Nishikawa S."/>
            <person name="Nori F."/>
            <person name="Ohara O."/>
            <person name="Okazaki Y."/>
            <person name="Orlando V."/>
            <person name="Pang K.C."/>
            <person name="Pavan W.J."/>
            <person name="Pavesi G."/>
            <person name="Pesole G."/>
            <person name="Petrovsky N."/>
            <person name="Piazza S."/>
            <person name="Reed J."/>
            <person name="Reid J.F."/>
            <person name="Ring B.Z."/>
            <person name="Ringwald M."/>
            <person name="Rost B."/>
            <person name="Ruan Y."/>
            <person name="Salzberg S.L."/>
            <person name="Sandelin A."/>
            <person name="Schneider C."/>
            <person name="Schoenbach C."/>
            <person name="Sekiguchi K."/>
            <person name="Semple C.A."/>
            <person name="Seno S."/>
            <person name="Sessa L."/>
            <person name="Sheng Y."/>
            <person name="Shibata Y."/>
            <person name="Shimada H."/>
            <person name="Shimada K."/>
            <person name="Silva D."/>
            <person name="Sinclair B."/>
            <person name="Sperling S."/>
            <person name="Stupka E."/>
            <person name="Sugiura K."/>
            <person name="Sultana R."/>
            <person name="Takenaka Y."/>
            <person name="Taki K."/>
            <person name="Tammoja K."/>
            <person name="Tan S.L."/>
            <person name="Tang S."/>
            <person name="Taylor M.S."/>
            <person name="Tegner J."/>
            <person name="Teichmann S.A."/>
            <person name="Ueda H.R."/>
            <person name="van Nimwegen E."/>
            <person name="Verardo R."/>
            <person name="Wei C.L."/>
            <person name="Yagi K."/>
            <person name="Yamanishi H."/>
            <person name="Zabarovsky E."/>
            <person name="Zhu S."/>
            <person name="Zimmer A."/>
            <person name="Hide W."/>
            <person name="Bult C."/>
            <person name="Grimmond S.M."/>
            <person name="Teasdale R.D."/>
            <person name="Liu E.T."/>
            <person name="Brusic V."/>
            <person name="Quackenbush J."/>
            <person name="Wahlestedt C."/>
            <person name="Mattick J.S."/>
            <person name="Hume D.A."/>
            <person name="Kai C."/>
            <person name="Sasaki D."/>
            <person name="Tomaru Y."/>
            <person name="Fukuda S."/>
            <person name="Kanamori-Katayama M."/>
            <person name="Suzuki M."/>
            <person name="Aoki J."/>
            <person name="Arakawa T."/>
            <person name="Iida J."/>
            <person name="Imamura K."/>
            <person name="Itoh M."/>
            <person name="Kato T."/>
            <person name="Kawaji H."/>
            <person name="Kawagashira N."/>
            <person name="Kawashima T."/>
            <person name="Kojima M."/>
            <person name="Kondo S."/>
            <person name="Konno H."/>
            <person name="Nakano K."/>
            <person name="Ninomiya N."/>
            <person name="Nishio T."/>
            <person name="Okada M."/>
            <person name="Plessy C."/>
            <person name="Shibata K."/>
            <person name="Shiraki T."/>
            <person name="Suzuki S."/>
            <person name="Tagami M."/>
            <person name="Waki K."/>
            <person name="Watahiki A."/>
            <person name="Okamura-Oho Y."/>
            <person name="Suzuki H."/>
            <person name="Kawai J."/>
            <person name="Hayashizaki Y."/>
        </authorList>
    </citation>
    <scope>NUCLEOTIDE SEQUENCE [LARGE SCALE MRNA]</scope>
</reference>
<reference key="2">
    <citation type="journal article" date="2009" name="PLoS Biol.">
        <title>Lineage-specific biology revealed by a finished genome assembly of the mouse.</title>
        <authorList>
            <person name="Church D.M."/>
            <person name="Goodstadt L."/>
            <person name="Hillier L.W."/>
            <person name="Zody M.C."/>
            <person name="Goldstein S."/>
            <person name="She X."/>
            <person name="Bult C.J."/>
            <person name="Agarwala R."/>
            <person name="Cherry J.L."/>
            <person name="DiCuccio M."/>
            <person name="Hlavina W."/>
            <person name="Kapustin Y."/>
            <person name="Meric P."/>
            <person name="Maglott D."/>
            <person name="Birtle Z."/>
            <person name="Marques A.C."/>
            <person name="Graves T."/>
            <person name="Zhou S."/>
            <person name="Teague B."/>
            <person name="Potamousis K."/>
            <person name="Churas C."/>
            <person name="Place M."/>
            <person name="Herschleb J."/>
            <person name="Runnheim R."/>
            <person name="Forrest D."/>
            <person name="Amos-Landgraf J."/>
            <person name="Schwartz D.C."/>
            <person name="Cheng Z."/>
            <person name="Lindblad-Toh K."/>
            <person name="Eichler E.E."/>
            <person name="Ponting C.P."/>
        </authorList>
    </citation>
    <scope>NUCLEOTIDE SEQUENCE [LARGE SCALE GENOMIC DNA]</scope>
    <source>
        <strain>C57BL/6J</strain>
    </source>
</reference>
<feature type="chain" id="PRO_0000443400" description="Small integral membrane protein 33">
    <location>
        <begin position="1"/>
        <end position="127"/>
    </location>
</feature>
<feature type="transmembrane region" description="Helical" evidence="1">
    <location>
        <begin position="38"/>
        <end position="58"/>
    </location>
</feature>
<feature type="glycosylation site" description="N-linked (GlcNAc...) asparagine" evidence="1">
    <location>
        <position position="15"/>
    </location>
</feature>